<accession>Q39BV2</accession>
<name>QUEC_BURL3</name>
<keyword id="KW-0067">ATP-binding</keyword>
<keyword id="KW-0436">Ligase</keyword>
<keyword id="KW-0479">Metal-binding</keyword>
<keyword id="KW-0547">Nucleotide-binding</keyword>
<keyword id="KW-0671">Queuosine biosynthesis</keyword>
<keyword id="KW-0862">Zinc</keyword>
<dbReference type="EC" id="6.3.4.20" evidence="1"/>
<dbReference type="EMBL" id="CP000151">
    <property type="protein sequence ID" value="ABB10064.1"/>
    <property type="molecule type" value="Genomic_DNA"/>
</dbReference>
<dbReference type="RefSeq" id="WP_011353565.1">
    <property type="nucleotide sequence ID" value="NZ_WNDV01000015.1"/>
</dbReference>
<dbReference type="SMR" id="Q39BV2"/>
<dbReference type="GeneID" id="93193802"/>
<dbReference type="KEGG" id="bur:Bcep18194_A6470"/>
<dbReference type="PATRIC" id="fig|482957.22.peg.3502"/>
<dbReference type="HOGENOM" id="CLU_081854_0_0_4"/>
<dbReference type="UniPathway" id="UPA00391"/>
<dbReference type="Proteomes" id="UP000002705">
    <property type="component" value="Chromosome 1"/>
</dbReference>
<dbReference type="GO" id="GO:0005524">
    <property type="term" value="F:ATP binding"/>
    <property type="evidence" value="ECO:0007669"/>
    <property type="project" value="UniProtKB-UniRule"/>
</dbReference>
<dbReference type="GO" id="GO:0016879">
    <property type="term" value="F:ligase activity, forming carbon-nitrogen bonds"/>
    <property type="evidence" value="ECO:0007669"/>
    <property type="project" value="UniProtKB-UniRule"/>
</dbReference>
<dbReference type="GO" id="GO:0008270">
    <property type="term" value="F:zinc ion binding"/>
    <property type="evidence" value="ECO:0007669"/>
    <property type="project" value="UniProtKB-UniRule"/>
</dbReference>
<dbReference type="GO" id="GO:0008616">
    <property type="term" value="P:queuosine biosynthetic process"/>
    <property type="evidence" value="ECO:0007669"/>
    <property type="project" value="UniProtKB-UniRule"/>
</dbReference>
<dbReference type="CDD" id="cd01995">
    <property type="entry name" value="QueC-like"/>
    <property type="match status" value="1"/>
</dbReference>
<dbReference type="Gene3D" id="3.40.50.620">
    <property type="entry name" value="HUPs"/>
    <property type="match status" value="1"/>
</dbReference>
<dbReference type="HAMAP" id="MF_01633">
    <property type="entry name" value="QueC"/>
    <property type="match status" value="1"/>
</dbReference>
<dbReference type="InterPro" id="IPR018317">
    <property type="entry name" value="QueC"/>
</dbReference>
<dbReference type="InterPro" id="IPR014729">
    <property type="entry name" value="Rossmann-like_a/b/a_fold"/>
</dbReference>
<dbReference type="NCBIfam" id="TIGR00364">
    <property type="entry name" value="7-cyano-7-deazaguanine synthase QueC"/>
    <property type="match status" value="1"/>
</dbReference>
<dbReference type="PANTHER" id="PTHR42914">
    <property type="entry name" value="7-CYANO-7-DEAZAGUANINE SYNTHASE"/>
    <property type="match status" value="1"/>
</dbReference>
<dbReference type="PANTHER" id="PTHR42914:SF1">
    <property type="entry name" value="7-CYANO-7-DEAZAGUANINE SYNTHASE"/>
    <property type="match status" value="1"/>
</dbReference>
<dbReference type="Pfam" id="PF06508">
    <property type="entry name" value="QueC"/>
    <property type="match status" value="1"/>
</dbReference>
<dbReference type="PIRSF" id="PIRSF006293">
    <property type="entry name" value="ExsB"/>
    <property type="match status" value="1"/>
</dbReference>
<dbReference type="SUPFAM" id="SSF52402">
    <property type="entry name" value="Adenine nucleotide alpha hydrolases-like"/>
    <property type="match status" value="1"/>
</dbReference>
<proteinExistence type="inferred from homology"/>
<protein>
    <recommendedName>
        <fullName evidence="1">7-cyano-7-deazaguanine synthase</fullName>
        <ecNumber evidence="1">6.3.4.20</ecNumber>
    </recommendedName>
    <alternativeName>
        <fullName evidence="1">7-cyano-7-carbaguanine synthase</fullName>
    </alternativeName>
    <alternativeName>
        <fullName evidence="1">PreQ(0) synthase</fullName>
    </alternativeName>
    <alternativeName>
        <fullName evidence="1">Queuosine biosynthesis protein QueC</fullName>
    </alternativeName>
</protein>
<reference key="1">
    <citation type="submission" date="2005-10" db="EMBL/GenBank/DDBJ databases">
        <title>Complete sequence of chromosome 1 of Burkholderia sp. 383.</title>
        <authorList>
            <consortium name="US DOE Joint Genome Institute"/>
            <person name="Copeland A."/>
            <person name="Lucas S."/>
            <person name="Lapidus A."/>
            <person name="Barry K."/>
            <person name="Detter J.C."/>
            <person name="Glavina T."/>
            <person name="Hammon N."/>
            <person name="Israni S."/>
            <person name="Pitluck S."/>
            <person name="Chain P."/>
            <person name="Malfatti S."/>
            <person name="Shin M."/>
            <person name="Vergez L."/>
            <person name="Schmutz J."/>
            <person name="Larimer F."/>
            <person name="Land M."/>
            <person name="Kyrpides N."/>
            <person name="Lykidis A."/>
            <person name="Richardson P."/>
        </authorList>
    </citation>
    <scope>NUCLEOTIDE SEQUENCE [LARGE SCALE GENOMIC DNA]</scope>
    <source>
        <strain>ATCC 17760 / DSM 23089 / LMG 22485 / NCIMB 9086 / R18194 / 383</strain>
    </source>
</reference>
<evidence type="ECO:0000255" key="1">
    <source>
        <dbReference type="HAMAP-Rule" id="MF_01633"/>
    </source>
</evidence>
<sequence>MIRTDAKDGALVLFSGGQDSATCVAWALERYQTVETLGFDYGQRHRVELECREGVREALKRDFPAWSDRLGDDHMIDLSVLGAISDTAMTRTIEIETAANGLPNTFVPGRNLMFMTIAAAIAYRRGLRVLVGGMCETDFSGYPDCRDDTMKALQVALNLGMDTRVVLETPLMWLDKAQTWQLAEQLGGEALVELIRVETHTCYVGERAELHDWGFGCGECPACKLRKRGYEAYLKGERVTEAPL</sequence>
<gene>
    <name evidence="1" type="primary">queC</name>
    <name type="ordered locus">Bcep18194_A6470</name>
</gene>
<feature type="chain" id="PRO_0000246820" description="7-cyano-7-deazaguanine synthase">
    <location>
        <begin position="1"/>
        <end position="244"/>
    </location>
</feature>
<feature type="binding site" evidence="1">
    <location>
        <begin position="14"/>
        <end position="24"/>
    </location>
    <ligand>
        <name>ATP</name>
        <dbReference type="ChEBI" id="CHEBI:30616"/>
    </ligand>
</feature>
<feature type="binding site" evidence="1">
    <location>
        <position position="202"/>
    </location>
    <ligand>
        <name>Zn(2+)</name>
        <dbReference type="ChEBI" id="CHEBI:29105"/>
    </ligand>
</feature>
<feature type="binding site" evidence="1">
    <location>
        <position position="217"/>
    </location>
    <ligand>
        <name>Zn(2+)</name>
        <dbReference type="ChEBI" id="CHEBI:29105"/>
    </ligand>
</feature>
<feature type="binding site" evidence="1">
    <location>
        <position position="220"/>
    </location>
    <ligand>
        <name>Zn(2+)</name>
        <dbReference type="ChEBI" id="CHEBI:29105"/>
    </ligand>
</feature>
<feature type="binding site" evidence="1">
    <location>
        <position position="223"/>
    </location>
    <ligand>
        <name>Zn(2+)</name>
        <dbReference type="ChEBI" id="CHEBI:29105"/>
    </ligand>
</feature>
<comment type="function">
    <text evidence="1">Catalyzes the ATP-dependent conversion of 7-carboxy-7-deazaguanine (CDG) to 7-cyano-7-deazaguanine (preQ(0)).</text>
</comment>
<comment type="catalytic activity">
    <reaction evidence="1">
        <text>7-carboxy-7-deazaguanine + NH4(+) + ATP = 7-cyano-7-deazaguanine + ADP + phosphate + H2O + H(+)</text>
        <dbReference type="Rhea" id="RHEA:27982"/>
        <dbReference type="ChEBI" id="CHEBI:15377"/>
        <dbReference type="ChEBI" id="CHEBI:15378"/>
        <dbReference type="ChEBI" id="CHEBI:28938"/>
        <dbReference type="ChEBI" id="CHEBI:30616"/>
        <dbReference type="ChEBI" id="CHEBI:43474"/>
        <dbReference type="ChEBI" id="CHEBI:45075"/>
        <dbReference type="ChEBI" id="CHEBI:61036"/>
        <dbReference type="ChEBI" id="CHEBI:456216"/>
        <dbReference type="EC" id="6.3.4.20"/>
    </reaction>
</comment>
<comment type="cofactor">
    <cofactor evidence="1">
        <name>Zn(2+)</name>
        <dbReference type="ChEBI" id="CHEBI:29105"/>
    </cofactor>
    <text evidence="1">Binds 1 zinc ion per subunit.</text>
</comment>
<comment type="pathway">
    <text evidence="1">Purine metabolism; 7-cyano-7-deazaguanine biosynthesis.</text>
</comment>
<comment type="similarity">
    <text evidence="1">Belongs to the QueC family.</text>
</comment>
<organism>
    <name type="scientific">Burkholderia lata (strain ATCC 17760 / DSM 23089 / LMG 22485 / NCIMB 9086 / R18194 / 383)</name>
    <dbReference type="NCBI Taxonomy" id="482957"/>
    <lineage>
        <taxon>Bacteria</taxon>
        <taxon>Pseudomonadati</taxon>
        <taxon>Pseudomonadota</taxon>
        <taxon>Betaproteobacteria</taxon>
        <taxon>Burkholderiales</taxon>
        <taxon>Burkholderiaceae</taxon>
        <taxon>Burkholderia</taxon>
        <taxon>Burkholderia cepacia complex</taxon>
    </lineage>
</organism>